<organism>
    <name type="scientific">Gluconobacter oxydans (strain 621H)</name>
    <name type="common">Gluconobacter suboxydans</name>
    <dbReference type="NCBI Taxonomy" id="290633"/>
    <lineage>
        <taxon>Bacteria</taxon>
        <taxon>Pseudomonadati</taxon>
        <taxon>Pseudomonadota</taxon>
        <taxon>Alphaproteobacteria</taxon>
        <taxon>Acetobacterales</taxon>
        <taxon>Acetobacteraceae</taxon>
        <taxon>Gluconobacter</taxon>
    </lineage>
</organism>
<gene>
    <name evidence="1" type="primary">plsY</name>
    <name type="ordered locus">GOX1265</name>
</gene>
<dbReference type="EC" id="2.3.1.275" evidence="1"/>
<dbReference type="EMBL" id="CP000009">
    <property type="protein sequence ID" value="AAW61026.1"/>
    <property type="molecule type" value="Genomic_DNA"/>
</dbReference>
<dbReference type="RefSeq" id="WP_011252818.1">
    <property type="nucleotide sequence ID" value="NZ_LT900338.1"/>
</dbReference>
<dbReference type="SMR" id="Q5FRH0"/>
<dbReference type="STRING" id="290633.GOX1265"/>
<dbReference type="GeneID" id="56905580"/>
<dbReference type="KEGG" id="gox:GOX1265"/>
<dbReference type="eggNOG" id="COG0344">
    <property type="taxonomic scope" value="Bacteria"/>
</dbReference>
<dbReference type="HOGENOM" id="CLU_081254_1_0_5"/>
<dbReference type="UniPathway" id="UPA00085"/>
<dbReference type="Proteomes" id="UP000006375">
    <property type="component" value="Chromosome"/>
</dbReference>
<dbReference type="GO" id="GO:0005886">
    <property type="term" value="C:plasma membrane"/>
    <property type="evidence" value="ECO:0007669"/>
    <property type="project" value="UniProtKB-SubCell"/>
</dbReference>
<dbReference type="GO" id="GO:0043772">
    <property type="term" value="F:acyl-phosphate glycerol-3-phosphate acyltransferase activity"/>
    <property type="evidence" value="ECO:0007669"/>
    <property type="project" value="UniProtKB-UniRule"/>
</dbReference>
<dbReference type="GO" id="GO:0008654">
    <property type="term" value="P:phospholipid biosynthetic process"/>
    <property type="evidence" value="ECO:0007669"/>
    <property type="project" value="UniProtKB-UniRule"/>
</dbReference>
<dbReference type="HAMAP" id="MF_01043">
    <property type="entry name" value="PlsY"/>
    <property type="match status" value="1"/>
</dbReference>
<dbReference type="InterPro" id="IPR003811">
    <property type="entry name" value="G3P_acylTferase_PlsY"/>
</dbReference>
<dbReference type="NCBIfam" id="TIGR00023">
    <property type="entry name" value="glycerol-3-phosphate 1-O-acyltransferase PlsY"/>
    <property type="match status" value="1"/>
</dbReference>
<dbReference type="PANTHER" id="PTHR30309:SF0">
    <property type="entry name" value="GLYCEROL-3-PHOSPHATE ACYLTRANSFERASE-RELATED"/>
    <property type="match status" value="1"/>
</dbReference>
<dbReference type="PANTHER" id="PTHR30309">
    <property type="entry name" value="INNER MEMBRANE PROTEIN YGIH"/>
    <property type="match status" value="1"/>
</dbReference>
<dbReference type="Pfam" id="PF02660">
    <property type="entry name" value="G3P_acyltransf"/>
    <property type="match status" value="1"/>
</dbReference>
<dbReference type="SMART" id="SM01207">
    <property type="entry name" value="G3P_acyltransf"/>
    <property type="match status" value="1"/>
</dbReference>
<accession>Q5FRH0</accession>
<feature type="chain" id="PRO_0000188376" description="Glycerol-3-phosphate acyltransferase">
    <location>
        <begin position="1"/>
        <end position="210"/>
    </location>
</feature>
<feature type="transmembrane region" description="Helical" evidence="1">
    <location>
        <begin position="8"/>
        <end position="28"/>
    </location>
</feature>
<feature type="transmembrane region" description="Helical" evidence="1">
    <location>
        <begin position="56"/>
        <end position="76"/>
    </location>
</feature>
<feature type="transmembrane region" description="Helical" evidence="1">
    <location>
        <begin position="87"/>
        <end position="107"/>
    </location>
</feature>
<feature type="transmembrane region" description="Helical" evidence="1">
    <location>
        <begin position="119"/>
        <end position="139"/>
    </location>
</feature>
<feature type="transmembrane region" description="Helical" evidence="1">
    <location>
        <begin position="144"/>
        <end position="164"/>
    </location>
</feature>
<feature type="transmembrane region" description="Helical" evidence="1">
    <location>
        <begin position="165"/>
        <end position="185"/>
    </location>
</feature>
<protein>
    <recommendedName>
        <fullName evidence="1">Glycerol-3-phosphate acyltransferase</fullName>
    </recommendedName>
    <alternativeName>
        <fullName evidence="1">Acyl-PO4 G3P acyltransferase</fullName>
    </alternativeName>
    <alternativeName>
        <fullName evidence="1">Acyl-phosphate--glycerol-3-phosphate acyltransferase</fullName>
    </alternativeName>
    <alternativeName>
        <fullName evidence="1">G3P acyltransferase</fullName>
        <shortName evidence="1">GPAT</shortName>
        <ecNumber evidence="1">2.3.1.275</ecNumber>
    </alternativeName>
    <alternativeName>
        <fullName evidence="1">Lysophosphatidic acid synthase</fullName>
        <shortName evidence="1">LPA synthase</shortName>
    </alternativeName>
</protein>
<comment type="function">
    <text evidence="1">Catalyzes the transfer of an acyl group from acyl-phosphate (acyl-PO(4)) to glycerol-3-phosphate (G3P) to form lysophosphatidic acid (LPA). This enzyme utilizes acyl-phosphate as fatty acyl donor, but not acyl-CoA or acyl-ACP.</text>
</comment>
<comment type="catalytic activity">
    <reaction evidence="1">
        <text>an acyl phosphate + sn-glycerol 3-phosphate = a 1-acyl-sn-glycero-3-phosphate + phosphate</text>
        <dbReference type="Rhea" id="RHEA:34075"/>
        <dbReference type="ChEBI" id="CHEBI:43474"/>
        <dbReference type="ChEBI" id="CHEBI:57597"/>
        <dbReference type="ChEBI" id="CHEBI:57970"/>
        <dbReference type="ChEBI" id="CHEBI:59918"/>
        <dbReference type="EC" id="2.3.1.275"/>
    </reaction>
</comment>
<comment type="pathway">
    <text evidence="1">Lipid metabolism; phospholipid metabolism.</text>
</comment>
<comment type="subunit">
    <text evidence="1">Probably interacts with PlsX.</text>
</comment>
<comment type="subcellular location">
    <subcellularLocation>
        <location evidence="1">Cell inner membrane</location>
        <topology evidence="1">Multi-pass membrane protein</topology>
    </subcellularLocation>
</comment>
<comment type="similarity">
    <text evidence="1">Belongs to the PlsY family.</text>
</comment>
<sequence>MSGFQAQLILLSLVSYVIGSIPFGLLLTAVAGGGDIRKIGSGNIGATNVLRTGRRGLAAATLLLDALKGALAVLIARFFFPGASETTMAVAAVAVVIGHCFPVWLGFRGGKGVATGLGTIWVLCWPVGLACCVVWLLVARLSRISSAGALAAFLLAPGLMVLLSGRPLHTPIPVATLLISLLIWARHSSNIARLVTGREPRVKVDQASRR</sequence>
<keyword id="KW-0997">Cell inner membrane</keyword>
<keyword id="KW-1003">Cell membrane</keyword>
<keyword id="KW-0444">Lipid biosynthesis</keyword>
<keyword id="KW-0443">Lipid metabolism</keyword>
<keyword id="KW-0472">Membrane</keyword>
<keyword id="KW-0594">Phospholipid biosynthesis</keyword>
<keyword id="KW-1208">Phospholipid metabolism</keyword>
<keyword id="KW-1185">Reference proteome</keyword>
<keyword id="KW-0808">Transferase</keyword>
<keyword id="KW-0812">Transmembrane</keyword>
<keyword id="KW-1133">Transmembrane helix</keyword>
<reference key="1">
    <citation type="journal article" date="2005" name="Nat. Biotechnol.">
        <title>Complete genome sequence of the acetic acid bacterium Gluconobacter oxydans.</title>
        <authorList>
            <person name="Prust C."/>
            <person name="Hoffmeister M."/>
            <person name="Liesegang H."/>
            <person name="Wiezer A."/>
            <person name="Fricke W.F."/>
            <person name="Ehrenreich A."/>
            <person name="Gottschalk G."/>
            <person name="Deppenmeier U."/>
        </authorList>
    </citation>
    <scope>NUCLEOTIDE SEQUENCE [LARGE SCALE GENOMIC DNA]</scope>
    <source>
        <strain>621H</strain>
    </source>
</reference>
<evidence type="ECO:0000255" key="1">
    <source>
        <dbReference type="HAMAP-Rule" id="MF_01043"/>
    </source>
</evidence>
<proteinExistence type="inferred from homology"/>
<name>PLSY_GLUOX</name>